<organism>
    <name type="scientific">Pectobacterium carotovorum subsp. carotovorum</name>
    <name type="common">Erwinia carotovora subsp. carotovora</name>
    <dbReference type="NCBI Taxonomy" id="555"/>
    <lineage>
        <taxon>Bacteria</taxon>
        <taxon>Pseudomonadati</taxon>
        <taxon>Pseudomonadota</taxon>
        <taxon>Gammaproteobacteria</taxon>
        <taxon>Enterobacterales</taxon>
        <taxon>Pectobacteriaceae</taxon>
        <taxon>Pectobacterium</taxon>
    </lineage>
</organism>
<sequence length="318" mass="32582">MKIKQAIDKIPGGLMLVPLFLGALCNTFTPGAGKYLGSFSNGLITGTIPILAVWFFCMGASIEFKATGTMLRKSGVLVVTKIATAWVVALIAGTFLPGDGIQNGMLAGISVLALVAAMDMTNGGLYAALMNQYGSKEEAGAFVLMSLESGPLMTMVILGASGIATFEPQLFVGAVLPFLIGFALGNLDPDLRKLFGNSVQTLIPFFAFALGNTINLSVILQTGFAGIFLGLLVIVVTGIPLILADKFIGGGNGTAGVAASSSAGAAVATPLLIANMAPEFAPVAQQATALVATSVIVTSVLVPIITALWAKRFSPKHA</sequence>
<reference key="1">
    <citation type="submission" date="1999-06" db="EMBL/GenBank/DDBJ databases">
        <authorList>
            <person name="McGowan S.J."/>
        </authorList>
    </citation>
    <scope>NUCLEOTIDE SEQUENCE [GENOMIC DNA]</scope>
    <source>
        <strain>ATCC 39048 / GS101 / SC 12</strain>
    </source>
</reference>
<dbReference type="EMBL" id="U17224">
    <property type="protein sequence ID" value="AAD38238.1"/>
    <property type="molecule type" value="Genomic_DNA"/>
</dbReference>
<dbReference type="RefSeq" id="WP_039277169.1">
    <property type="nucleotide sequence ID" value="NZ_QHMC01000009.1"/>
</dbReference>
<dbReference type="PATRIC" id="fig|555.22.peg.4216"/>
<dbReference type="GO" id="GO:0005886">
    <property type="term" value="C:plasma membrane"/>
    <property type="evidence" value="ECO:0007669"/>
    <property type="project" value="UniProtKB-SubCell"/>
</dbReference>
<dbReference type="GO" id="GO:0015649">
    <property type="term" value="F:2-keto-3-deoxygluconate:proton symporter activity"/>
    <property type="evidence" value="ECO:0007669"/>
    <property type="project" value="UniProtKB-UniRule"/>
</dbReference>
<dbReference type="HAMAP" id="MF_00070">
    <property type="entry name" value="KdgT"/>
    <property type="match status" value="1"/>
</dbReference>
<dbReference type="InterPro" id="IPR004684">
    <property type="entry name" value="2keto-3dGluconate_permease"/>
</dbReference>
<dbReference type="InterPro" id="IPR018395">
    <property type="entry name" value="2keto-3dGluconate_permease_sub"/>
</dbReference>
<dbReference type="NCBIfam" id="TIGR00793">
    <property type="entry name" value="kdgT"/>
    <property type="match status" value="1"/>
</dbReference>
<dbReference type="Pfam" id="PF03812">
    <property type="entry name" value="KdgT"/>
    <property type="match status" value="1"/>
</dbReference>
<feature type="chain" id="PRO_0000209678" description="2-keto-3-deoxygluconate permease">
    <location>
        <begin position="1"/>
        <end position="318"/>
    </location>
</feature>
<feature type="transmembrane region" description="Helical" evidence="1">
    <location>
        <begin position="10"/>
        <end position="30"/>
    </location>
</feature>
<feature type="transmembrane region" description="Helical" evidence="1">
    <location>
        <begin position="42"/>
        <end position="62"/>
    </location>
</feature>
<feature type="transmembrane region" description="Helical" evidence="1">
    <location>
        <begin position="76"/>
        <end position="96"/>
    </location>
</feature>
<feature type="transmembrane region" description="Helical" evidence="1">
    <location>
        <begin position="105"/>
        <end position="125"/>
    </location>
</feature>
<feature type="transmembrane region" description="Helical" evidence="1">
    <location>
        <begin position="139"/>
        <end position="159"/>
    </location>
</feature>
<feature type="transmembrane region" description="Helical" evidence="1">
    <location>
        <begin position="163"/>
        <end position="183"/>
    </location>
</feature>
<feature type="transmembrane region" description="Helical" evidence="1">
    <location>
        <begin position="199"/>
        <end position="219"/>
    </location>
</feature>
<feature type="transmembrane region" description="Helical" evidence="1">
    <location>
        <begin position="224"/>
        <end position="244"/>
    </location>
</feature>
<feature type="transmembrane region" description="Helical" evidence="1">
    <location>
        <begin position="263"/>
        <end position="283"/>
    </location>
</feature>
<feature type="transmembrane region" description="Helical" evidence="1">
    <location>
        <begin position="289"/>
        <end position="309"/>
    </location>
</feature>
<keyword id="KW-0997">Cell inner membrane</keyword>
<keyword id="KW-1003">Cell membrane</keyword>
<keyword id="KW-0472">Membrane</keyword>
<keyword id="KW-0762">Sugar transport</keyword>
<keyword id="KW-0769">Symport</keyword>
<keyword id="KW-0812">Transmembrane</keyword>
<keyword id="KW-1133">Transmembrane helix</keyword>
<keyword id="KW-0813">Transport</keyword>
<evidence type="ECO:0000255" key="1">
    <source>
        <dbReference type="HAMAP-Rule" id="MF_00070"/>
    </source>
</evidence>
<evidence type="ECO:0000305" key="2"/>
<name>KDGT_PECCC</name>
<accession>Q9XB52</accession>
<proteinExistence type="inferred from homology"/>
<comment type="function">
    <text evidence="1">Catalyzes the proton-dependent uptake of 2-keto-3-deoxygluconate (KDG) into the cell.</text>
</comment>
<comment type="catalytic activity">
    <reaction evidence="1">
        <text>2-dehydro-3-deoxy-D-gluconate(in) + H(+)(in) = 2-dehydro-3-deoxy-D-gluconate(out) + H(+)(out)</text>
        <dbReference type="Rhea" id="RHEA:29943"/>
        <dbReference type="ChEBI" id="CHEBI:15378"/>
        <dbReference type="ChEBI" id="CHEBI:57990"/>
    </reaction>
    <physiologicalReaction direction="right-to-left" evidence="1">
        <dbReference type="Rhea" id="RHEA:29945"/>
    </physiologicalReaction>
</comment>
<comment type="subcellular location">
    <subcellularLocation>
        <location evidence="1">Cell inner membrane</location>
        <topology evidence="1">Multi-pass membrane protein</topology>
    </subcellularLocation>
</comment>
<comment type="similarity">
    <text evidence="1 2">Belongs to the KdgT transporter family.</text>
</comment>
<protein>
    <recommendedName>
        <fullName evidence="1">2-keto-3-deoxygluconate permease</fullName>
        <shortName evidence="1">KDG permease</shortName>
    </recommendedName>
</protein>
<gene>
    <name evidence="1" type="primary">kdgT</name>
</gene>